<protein>
    <recommendedName>
        <fullName evidence="1">UDP-N-acetylmuramate--L-alanine ligase</fullName>
        <ecNumber evidence="1">6.3.2.8</ecNumber>
    </recommendedName>
    <alternativeName>
        <fullName evidence="1">UDP-N-acetylmuramoyl-L-alanine synthetase</fullName>
    </alternativeName>
</protein>
<reference key="1">
    <citation type="journal article" date="2009" name="BMC Genomics">
        <title>Pseudogene accumulation in the evolutionary histories of Salmonella enterica serovars Paratyphi A and Typhi.</title>
        <authorList>
            <person name="Holt K.E."/>
            <person name="Thomson N.R."/>
            <person name="Wain J."/>
            <person name="Langridge G.C."/>
            <person name="Hasan R."/>
            <person name="Bhutta Z.A."/>
            <person name="Quail M.A."/>
            <person name="Norbertczak H."/>
            <person name="Walker D."/>
            <person name="Simmonds M."/>
            <person name="White B."/>
            <person name="Bason N."/>
            <person name="Mungall K."/>
            <person name="Dougan G."/>
            <person name="Parkhill J."/>
        </authorList>
    </citation>
    <scope>NUCLEOTIDE SEQUENCE [LARGE SCALE GENOMIC DNA]</scope>
    <source>
        <strain>AKU_12601</strain>
    </source>
</reference>
<organism>
    <name type="scientific">Salmonella paratyphi A (strain AKU_12601)</name>
    <dbReference type="NCBI Taxonomy" id="554290"/>
    <lineage>
        <taxon>Bacteria</taxon>
        <taxon>Pseudomonadati</taxon>
        <taxon>Pseudomonadota</taxon>
        <taxon>Gammaproteobacteria</taxon>
        <taxon>Enterobacterales</taxon>
        <taxon>Enterobacteriaceae</taxon>
        <taxon>Salmonella</taxon>
    </lineage>
</organism>
<sequence length="491" mass="53498">MNTQQLAKLRSIVPEMRRVRHIHFVGIGGAGMGGIAEVLANEGYQISGSDLAPNPVTQQLTSLGATIFFNHRPENVRDASVVVVSSAISSDNPEIVAAHEARIPVIRRAEMLAELMRFRHGIAIAGTHGKTTTTAMVSSIYAEAGLDPTFVNGGLVKAAGVHARLGHSRYLIAEADESDASFLHLQPMVAIVTNIEADHMDTYHGDFENLKQTFINFLHNLPFYGRAVMCVDDPVIRELLPRVGRQTTTYGFSEDADVRVEDYQQIGPQGHFTLLRQGMPDLHVTLNAPGRHNALNAAAAVAVATEEGIDDDAILRALESFQGTGRRFDFLGEFPLEPVNGKAGTAMLVDDYGHHPTEVDATIKAARAGWPDKNLVMLFQPHRYTRTRDLYDDFANVLTQVDALLMLDVYPAGEAPIPGADSRSLCRTIRNRGKIDPILVSDPAQVATMLAPVLTGNDLILVQGAGNVGKIARYLSEIKLKPQIQEEEQHG</sequence>
<dbReference type="EC" id="6.3.2.8" evidence="1"/>
<dbReference type="EMBL" id="FM200053">
    <property type="protein sequence ID" value="CAR58238.1"/>
    <property type="molecule type" value="Genomic_DNA"/>
</dbReference>
<dbReference type="RefSeq" id="WP_001096078.1">
    <property type="nucleotide sequence ID" value="NC_011147.1"/>
</dbReference>
<dbReference type="SMR" id="B5BLC3"/>
<dbReference type="KEGG" id="sek:SSPA0127"/>
<dbReference type="HOGENOM" id="CLU_028104_2_2_6"/>
<dbReference type="UniPathway" id="UPA00219"/>
<dbReference type="Proteomes" id="UP000001869">
    <property type="component" value="Chromosome"/>
</dbReference>
<dbReference type="GO" id="GO:0005737">
    <property type="term" value="C:cytoplasm"/>
    <property type="evidence" value="ECO:0007669"/>
    <property type="project" value="UniProtKB-SubCell"/>
</dbReference>
<dbReference type="GO" id="GO:0005524">
    <property type="term" value="F:ATP binding"/>
    <property type="evidence" value="ECO:0007669"/>
    <property type="project" value="UniProtKB-UniRule"/>
</dbReference>
<dbReference type="GO" id="GO:0008763">
    <property type="term" value="F:UDP-N-acetylmuramate-L-alanine ligase activity"/>
    <property type="evidence" value="ECO:0007669"/>
    <property type="project" value="UniProtKB-UniRule"/>
</dbReference>
<dbReference type="GO" id="GO:0051301">
    <property type="term" value="P:cell division"/>
    <property type="evidence" value="ECO:0007669"/>
    <property type="project" value="UniProtKB-KW"/>
</dbReference>
<dbReference type="GO" id="GO:0071555">
    <property type="term" value="P:cell wall organization"/>
    <property type="evidence" value="ECO:0007669"/>
    <property type="project" value="UniProtKB-KW"/>
</dbReference>
<dbReference type="GO" id="GO:0009252">
    <property type="term" value="P:peptidoglycan biosynthetic process"/>
    <property type="evidence" value="ECO:0007669"/>
    <property type="project" value="UniProtKB-UniRule"/>
</dbReference>
<dbReference type="GO" id="GO:0008360">
    <property type="term" value="P:regulation of cell shape"/>
    <property type="evidence" value="ECO:0007669"/>
    <property type="project" value="UniProtKB-KW"/>
</dbReference>
<dbReference type="FunFam" id="3.40.1190.10:FF:000001">
    <property type="entry name" value="UDP-N-acetylmuramate--L-alanine ligase"/>
    <property type="match status" value="1"/>
</dbReference>
<dbReference type="FunFam" id="3.40.50.720:FF:000046">
    <property type="entry name" value="UDP-N-acetylmuramate--L-alanine ligase"/>
    <property type="match status" value="1"/>
</dbReference>
<dbReference type="FunFam" id="3.90.190.20:FF:000001">
    <property type="entry name" value="UDP-N-acetylmuramate--L-alanine ligase"/>
    <property type="match status" value="1"/>
</dbReference>
<dbReference type="Gene3D" id="3.90.190.20">
    <property type="entry name" value="Mur ligase, C-terminal domain"/>
    <property type="match status" value="1"/>
</dbReference>
<dbReference type="Gene3D" id="3.40.1190.10">
    <property type="entry name" value="Mur-like, catalytic domain"/>
    <property type="match status" value="1"/>
</dbReference>
<dbReference type="Gene3D" id="3.40.50.720">
    <property type="entry name" value="NAD(P)-binding Rossmann-like Domain"/>
    <property type="match status" value="1"/>
</dbReference>
<dbReference type="HAMAP" id="MF_00046">
    <property type="entry name" value="MurC"/>
    <property type="match status" value="1"/>
</dbReference>
<dbReference type="InterPro" id="IPR036565">
    <property type="entry name" value="Mur-like_cat_sf"/>
</dbReference>
<dbReference type="InterPro" id="IPR004101">
    <property type="entry name" value="Mur_ligase_C"/>
</dbReference>
<dbReference type="InterPro" id="IPR036615">
    <property type="entry name" value="Mur_ligase_C_dom_sf"/>
</dbReference>
<dbReference type="InterPro" id="IPR013221">
    <property type="entry name" value="Mur_ligase_cen"/>
</dbReference>
<dbReference type="InterPro" id="IPR000713">
    <property type="entry name" value="Mur_ligase_N"/>
</dbReference>
<dbReference type="InterPro" id="IPR050061">
    <property type="entry name" value="MurCDEF_pg_biosynth"/>
</dbReference>
<dbReference type="InterPro" id="IPR005758">
    <property type="entry name" value="UDP-N-AcMur_Ala_ligase_MurC"/>
</dbReference>
<dbReference type="NCBIfam" id="TIGR01082">
    <property type="entry name" value="murC"/>
    <property type="match status" value="1"/>
</dbReference>
<dbReference type="PANTHER" id="PTHR43445:SF3">
    <property type="entry name" value="UDP-N-ACETYLMURAMATE--L-ALANINE LIGASE"/>
    <property type="match status" value="1"/>
</dbReference>
<dbReference type="PANTHER" id="PTHR43445">
    <property type="entry name" value="UDP-N-ACETYLMURAMATE--L-ALANINE LIGASE-RELATED"/>
    <property type="match status" value="1"/>
</dbReference>
<dbReference type="Pfam" id="PF01225">
    <property type="entry name" value="Mur_ligase"/>
    <property type="match status" value="1"/>
</dbReference>
<dbReference type="Pfam" id="PF02875">
    <property type="entry name" value="Mur_ligase_C"/>
    <property type="match status" value="1"/>
</dbReference>
<dbReference type="Pfam" id="PF08245">
    <property type="entry name" value="Mur_ligase_M"/>
    <property type="match status" value="1"/>
</dbReference>
<dbReference type="SUPFAM" id="SSF51984">
    <property type="entry name" value="MurCD N-terminal domain"/>
    <property type="match status" value="1"/>
</dbReference>
<dbReference type="SUPFAM" id="SSF53623">
    <property type="entry name" value="MurD-like peptide ligases, catalytic domain"/>
    <property type="match status" value="1"/>
</dbReference>
<dbReference type="SUPFAM" id="SSF53244">
    <property type="entry name" value="MurD-like peptide ligases, peptide-binding domain"/>
    <property type="match status" value="1"/>
</dbReference>
<gene>
    <name evidence="1" type="primary">murC</name>
    <name type="ordered locus">SSPA0127</name>
</gene>
<comment type="function">
    <text evidence="1">Cell wall formation.</text>
</comment>
<comment type="catalytic activity">
    <reaction evidence="1">
        <text>UDP-N-acetyl-alpha-D-muramate + L-alanine + ATP = UDP-N-acetyl-alpha-D-muramoyl-L-alanine + ADP + phosphate + H(+)</text>
        <dbReference type="Rhea" id="RHEA:23372"/>
        <dbReference type="ChEBI" id="CHEBI:15378"/>
        <dbReference type="ChEBI" id="CHEBI:30616"/>
        <dbReference type="ChEBI" id="CHEBI:43474"/>
        <dbReference type="ChEBI" id="CHEBI:57972"/>
        <dbReference type="ChEBI" id="CHEBI:70757"/>
        <dbReference type="ChEBI" id="CHEBI:83898"/>
        <dbReference type="ChEBI" id="CHEBI:456216"/>
        <dbReference type="EC" id="6.3.2.8"/>
    </reaction>
</comment>
<comment type="pathway">
    <text evidence="1">Cell wall biogenesis; peptidoglycan biosynthesis.</text>
</comment>
<comment type="subcellular location">
    <subcellularLocation>
        <location evidence="1">Cytoplasm</location>
    </subcellularLocation>
</comment>
<comment type="similarity">
    <text evidence="1">Belongs to the MurCDEF family.</text>
</comment>
<feature type="chain" id="PRO_1000091134" description="UDP-N-acetylmuramate--L-alanine ligase">
    <location>
        <begin position="1"/>
        <end position="491"/>
    </location>
</feature>
<feature type="binding site" evidence="1">
    <location>
        <begin position="126"/>
        <end position="132"/>
    </location>
    <ligand>
        <name>ATP</name>
        <dbReference type="ChEBI" id="CHEBI:30616"/>
    </ligand>
</feature>
<name>MURC_SALPK</name>
<evidence type="ECO:0000255" key="1">
    <source>
        <dbReference type="HAMAP-Rule" id="MF_00046"/>
    </source>
</evidence>
<proteinExistence type="inferred from homology"/>
<keyword id="KW-0067">ATP-binding</keyword>
<keyword id="KW-0131">Cell cycle</keyword>
<keyword id="KW-0132">Cell division</keyword>
<keyword id="KW-0133">Cell shape</keyword>
<keyword id="KW-0961">Cell wall biogenesis/degradation</keyword>
<keyword id="KW-0963">Cytoplasm</keyword>
<keyword id="KW-0436">Ligase</keyword>
<keyword id="KW-0547">Nucleotide-binding</keyword>
<keyword id="KW-0573">Peptidoglycan synthesis</keyword>
<accession>B5BLC3</accession>